<sequence>MPELPEVETTKQGIKPHLEGRMITAVQVRNRKLRLPVPLNLNELCQGKHITAITRRGKYILLHMDKGYLLIHLGMSGHLRIVSQTANPQKHDHVDLHINNGLALRFCDPRRFGLFIYIDENPYQHPLLAHLGPEPLSDDFNSEYLLRKAANKSQSIKSFIMDSQIVVGIGNIYAAESLFLAKIHPNTSAKKITTEEFNSLTGHIKKILESAIEAGGTTLRDFYSSDGKPGYFRFALKVYGRKNLPCLVCENKIETVVIAGRHSAFCPHCQPIIT</sequence>
<comment type="function">
    <text evidence="2">Involved in base excision repair of DNA damaged by oxidation or by mutagenic agents. Acts as a DNA glycosylase that recognizes and removes damaged bases. Has a preference for oxidized purines, such as 7,8-dihydro-8-oxoguanine (8-oxoG). Has AP (apurinic/apyrimidinic) lyase activity and introduces nicks in the DNA strand. Cleaves the DNA backbone by beta-delta elimination to generate a single-strand break at the site of the removed base with both 3'- and 5'-phosphates.</text>
</comment>
<comment type="catalytic activity">
    <reaction evidence="2">
        <text>Hydrolysis of DNA containing ring-opened 7-methylguanine residues, releasing 2,6-diamino-4-hydroxy-5-(N-methyl)formamidopyrimidine.</text>
        <dbReference type="EC" id="3.2.2.23"/>
    </reaction>
</comment>
<comment type="catalytic activity">
    <reaction evidence="2">
        <text>2'-deoxyribonucleotide-(2'-deoxyribose 5'-phosphate)-2'-deoxyribonucleotide-DNA = a 3'-end 2'-deoxyribonucleotide-(2,3-dehydro-2,3-deoxyribose 5'-phosphate)-DNA + a 5'-end 5'-phospho-2'-deoxyribonucleoside-DNA + H(+)</text>
        <dbReference type="Rhea" id="RHEA:66592"/>
        <dbReference type="Rhea" id="RHEA-COMP:13180"/>
        <dbReference type="Rhea" id="RHEA-COMP:16897"/>
        <dbReference type="Rhea" id="RHEA-COMP:17067"/>
        <dbReference type="ChEBI" id="CHEBI:15378"/>
        <dbReference type="ChEBI" id="CHEBI:136412"/>
        <dbReference type="ChEBI" id="CHEBI:157695"/>
        <dbReference type="ChEBI" id="CHEBI:167181"/>
        <dbReference type="EC" id="4.2.99.18"/>
    </reaction>
</comment>
<comment type="cofactor">
    <cofactor evidence="2">
        <name>Zn(2+)</name>
        <dbReference type="ChEBI" id="CHEBI:29105"/>
    </cofactor>
    <text evidence="2">Binds 1 zinc ion per subunit.</text>
</comment>
<comment type="subunit">
    <text evidence="2">Monomer.</text>
</comment>
<comment type="similarity">
    <text evidence="2">Belongs to the FPG family.</text>
</comment>
<proteinExistence type="inferred from homology"/>
<feature type="initiator methionine" description="Removed" evidence="1">
    <location>
        <position position="1"/>
    </location>
</feature>
<feature type="chain" id="PRO_0000228445" description="Formamidopyrimidine-DNA glycosylase">
    <location>
        <begin position="2"/>
        <end position="274"/>
    </location>
</feature>
<feature type="zinc finger region" description="FPG-type" evidence="2">
    <location>
        <begin position="237"/>
        <end position="271"/>
    </location>
</feature>
<feature type="active site" description="Schiff-base intermediate with DNA" evidence="2">
    <location>
        <position position="2"/>
    </location>
</feature>
<feature type="active site" description="Proton donor" evidence="2">
    <location>
        <position position="3"/>
    </location>
</feature>
<feature type="active site" description="Proton donor; for beta-elimination activity" evidence="2">
    <location>
        <position position="58"/>
    </location>
</feature>
<feature type="active site" description="Proton donor; for delta-elimination activity" evidence="2">
    <location>
        <position position="261"/>
    </location>
</feature>
<feature type="binding site" evidence="2">
    <location>
        <position position="91"/>
    </location>
    <ligand>
        <name>DNA</name>
        <dbReference type="ChEBI" id="CHEBI:16991"/>
    </ligand>
</feature>
<feature type="binding site" evidence="2">
    <location>
        <position position="110"/>
    </location>
    <ligand>
        <name>DNA</name>
        <dbReference type="ChEBI" id="CHEBI:16991"/>
    </ligand>
</feature>
<feature type="binding site" evidence="2">
    <location>
        <position position="152"/>
    </location>
    <ligand>
        <name>DNA</name>
        <dbReference type="ChEBI" id="CHEBI:16991"/>
    </ligand>
</feature>
<protein>
    <recommendedName>
        <fullName evidence="2">Formamidopyrimidine-DNA glycosylase</fullName>
        <shortName evidence="2">Fapy-DNA glycosylase</shortName>
        <ecNumber evidence="2">3.2.2.23</ecNumber>
    </recommendedName>
    <alternativeName>
        <fullName evidence="2">DNA-(apurinic or apyrimidinic site) lyase MutM</fullName>
        <shortName evidence="2">AP lyase MutM</shortName>
        <ecNumber evidence="2">4.2.99.18</ecNumber>
    </alternativeName>
</protein>
<dbReference type="EC" id="3.2.2.23" evidence="2"/>
<dbReference type="EC" id="4.2.99.18" evidence="2"/>
<dbReference type="EMBL" id="AE017354">
    <property type="protein sequence ID" value="AAU26651.1"/>
    <property type="molecule type" value="Genomic_DNA"/>
</dbReference>
<dbReference type="RefSeq" id="WP_010946302.1">
    <property type="nucleotide sequence ID" value="NC_002942.5"/>
</dbReference>
<dbReference type="RefSeq" id="YP_094598.1">
    <property type="nucleotide sequence ID" value="NC_002942.5"/>
</dbReference>
<dbReference type="SMR" id="Q5ZY18"/>
<dbReference type="STRING" id="272624.lpg0557"/>
<dbReference type="PaxDb" id="272624-lpg0557"/>
<dbReference type="GeneID" id="57034555"/>
<dbReference type="KEGG" id="lpn:lpg0557"/>
<dbReference type="PATRIC" id="fig|272624.6.peg.577"/>
<dbReference type="eggNOG" id="COG0266">
    <property type="taxonomic scope" value="Bacteria"/>
</dbReference>
<dbReference type="HOGENOM" id="CLU_038423_1_1_6"/>
<dbReference type="OrthoDB" id="9800855at2"/>
<dbReference type="Proteomes" id="UP000000609">
    <property type="component" value="Chromosome"/>
</dbReference>
<dbReference type="GO" id="GO:0034039">
    <property type="term" value="F:8-oxo-7,8-dihydroguanine DNA N-glycosylase activity"/>
    <property type="evidence" value="ECO:0007669"/>
    <property type="project" value="TreeGrafter"/>
</dbReference>
<dbReference type="GO" id="GO:0140078">
    <property type="term" value="F:class I DNA-(apurinic or apyrimidinic site) endonuclease activity"/>
    <property type="evidence" value="ECO:0007669"/>
    <property type="project" value="UniProtKB-EC"/>
</dbReference>
<dbReference type="GO" id="GO:0003684">
    <property type="term" value="F:damaged DNA binding"/>
    <property type="evidence" value="ECO:0007669"/>
    <property type="project" value="InterPro"/>
</dbReference>
<dbReference type="GO" id="GO:0008270">
    <property type="term" value="F:zinc ion binding"/>
    <property type="evidence" value="ECO:0007669"/>
    <property type="project" value="UniProtKB-UniRule"/>
</dbReference>
<dbReference type="GO" id="GO:0006284">
    <property type="term" value="P:base-excision repair"/>
    <property type="evidence" value="ECO:0007669"/>
    <property type="project" value="InterPro"/>
</dbReference>
<dbReference type="CDD" id="cd08966">
    <property type="entry name" value="EcFpg-like_N"/>
    <property type="match status" value="1"/>
</dbReference>
<dbReference type="FunFam" id="1.10.8.50:FF:000003">
    <property type="entry name" value="Formamidopyrimidine-DNA glycosylase"/>
    <property type="match status" value="1"/>
</dbReference>
<dbReference type="FunFam" id="3.20.190.10:FF:000001">
    <property type="entry name" value="Formamidopyrimidine-DNA glycosylase"/>
    <property type="match status" value="1"/>
</dbReference>
<dbReference type="Gene3D" id="1.10.8.50">
    <property type="match status" value="1"/>
</dbReference>
<dbReference type="Gene3D" id="3.20.190.10">
    <property type="entry name" value="MutM-like, N-terminal"/>
    <property type="match status" value="1"/>
</dbReference>
<dbReference type="HAMAP" id="MF_00103">
    <property type="entry name" value="Fapy_DNA_glycosyl"/>
    <property type="match status" value="1"/>
</dbReference>
<dbReference type="InterPro" id="IPR015886">
    <property type="entry name" value="DNA_glyclase/AP_lyase_DNA-bd"/>
</dbReference>
<dbReference type="InterPro" id="IPR020629">
    <property type="entry name" value="Formamido-pyr_DNA_Glyclase"/>
</dbReference>
<dbReference type="InterPro" id="IPR012319">
    <property type="entry name" value="FPG_cat"/>
</dbReference>
<dbReference type="InterPro" id="IPR035937">
    <property type="entry name" value="MutM-like_N-ter"/>
</dbReference>
<dbReference type="InterPro" id="IPR010979">
    <property type="entry name" value="Ribosomal_uS13-like_H2TH"/>
</dbReference>
<dbReference type="InterPro" id="IPR000214">
    <property type="entry name" value="Znf_DNA_glyclase/AP_lyase"/>
</dbReference>
<dbReference type="InterPro" id="IPR010663">
    <property type="entry name" value="Znf_FPG/IleRS"/>
</dbReference>
<dbReference type="NCBIfam" id="TIGR00577">
    <property type="entry name" value="fpg"/>
    <property type="match status" value="1"/>
</dbReference>
<dbReference type="NCBIfam" id="NF002211">
    <property type="entry name" value="PRK01103.1"/>
    <property type="match status" value="1"/>
</dbReference>
<dbReference type="PANTHER" id="PTHR22993">
    <property type="entry name" value="FORMAMIDOPYRIMIDINE-DNA GLYCOSYLASE"/>
    <property type="match status" value="1"/>
</dbReference>
<dbReference type="PANTHER" id="PTHR22993:SF9">
    <property type="entry name" value="FORMAMIDOPYRIMIDINE-DNA GLYCOSYLASE"/>
    <property type="match status" value="1"/>
</dbReference>
<dbReference type="Pfam" id="PF01149">
    <property type="entry name" value="Fapy_DNA_glyco"/>
    <property type="match status" value="1"/>
</dbReference>
<dbReference type="Pfam" id="PF06831">
    <property type="entry name" value="H2TH"/>
    <property type="match status" value="1"/>
</dbReference>
<dbReference type="Pfam" id="PF06827">
    <property type="entry name" value="zf-FPG_IleRS"/>
    <property type="match status" value="1"/>
</dbReference>
<dbReference type="SMART" id="SM00898">
    <property type="entry name" value="Fapy_DNA_glyco"/>
    <property type="match status" value="1"/>
</dbReference>
<dbReference type="SMART" id="SM01232">
    <property type="entry name" value="H2TH"/>
    <property type="match status" value="1"/>
</dbReference>
<dbReference type="SUPFAM" id="SSF57716">
    <property type="entry name" value="Glucocorticoid receptor-like (DNA-binding domain)"/>
    <property type="match status" value="1"/>
</dbReference>
<dbReference type="SUPFAM" id="SSF81624">
    <property type="entry name" value="N-terminal domain of MutM-like DNA repair proteins"/>
    <property type="match status" value="1"/>
</dbReference>
<dbReference type="SUPFAM" id="SSF46946">
    <property type="entry name" value="S13-like H2TH domain"/>
    <property type="match status" value="1"/>
</dbReference>
<dbReference type="PROSITE" id="PS51068">
    <property type="entry name" value="FPG_CAT"/>
    <property type="match status" value="1"/>
</dbReference>
<dbReference type="PROSITE" id="PS51066">
    <property type="entry name" value="ZF_FPG_2"/>
    <property type="match status" value="1"/>
</dbReference>
<gene>
    <name evidence="2" type="primary">mutM</name>
    <name evidence="2" type="synonym">fpg</name>
    <name type="ordered locus">lpg0557</name>
</gene>
<accession>Q5ZY18</accession>
<reference key="1">
    <citation type="journal article" date="2004" name="Science">
        <title>The genomic sequence of the accidental pathogen Legionella pneumophila.</title>
        <authorList>
            <person name="Chien M."/>
            <person name="Morozova I."/>
            <person name="Shi S."/>
            <person name="Sheng H."/>
            <person name="Chen J."/>
            <person name="Gomez S.M."/>
            <person name="Asamani G."/>
            <person name="Hill K."/>
            <person name="Nuara J."/>
            <person name="Feder M."/>
            <person name="Rineer J."/>
            <person name="Greenberg J.J."/>
            <person name="Steshenko V."/>
            <person name="Park S.H."/>
            <person name="Zhao B."/>
            <person name="Teplitskaya E."/>
            <person name="Edwards J.R."/>
            <person name="Pampou S."/>
            <person name="Georghiou A."/>
            <person name="Chou I.-C."/>
            <person name="Iannuccilli W."/>
            <person name="Ulz M.E."/>
            <person name="Kim D.H."/>
            <person name="Geringer-Sameth A."/>
            <person name="Goldsberry C."/>
            <person name="Morozov P."/>
            <person name="Fischer S.G."/>
            <person name="Segal G."/>
            <person name="Qu X."/>
            <person name="Rzhetsky A."/>
            <person name="Zhang P."/>
            <person name="Cayanis E."/>
            <person name="De Jong P.J."/>
            <person name="Ju J."/>
            <person name="Kalachikov S."/>
            <person name="Shuman H.A."/>
            <person name="Russo J.J."/>
        </authorList>
    </citation>
    <scope>NUCLEOTIDE SEQUENCE [LARGE SCALE GENOMIC DNA]</scope>
    <source>
        <strain>Philadelphia 1 / ATCC 33152 / DSM 7513</strain>
    </source>
</reference>
<keyword id="KW-0227">DNA damage</keyword>
<keyword id="KW-0234">DNA repair</keyword>
<keyword id="KW-0238">DNA-binding</keyword>
<keyword id="KW-0326">Glycosidase</keyword>
<keyword id="KW-0378">Hydrolase</keyword>
<keyword id="KW-0456">Lyase</keyword>
<keyword id="KW-0479">Metal-binding</keyword>
<keyword id="KW-0511">Multifunctional enzyme</keyword>
<keyword id="KW-1185">Reference proteome</keyword>
<keyword id="KW-0862">Zinc</keyword>
<keyword id="KW-0863">Zinc-finger</keyword>
<evidence type="ECO:0000250" key="1"/>
<evidence type="ECO:0000255" key="2">
    <source>
        <dbReference type="HAMAP-Rule" id="MF_00103"/>
    </source>
</evidence>
<name>FPG_LEGPH</name>
<organism>
    <name type="scientific">Legionella pneumophila subsp. pneumophila (strain Philadelphia 1 / ATCC 33152 / DSM 7513)</name>
    <dbReference type="NCBI Taxonomy" id="272624"/>
    <lineage>
        <taxon>Bacteria</taxon>
        <taxon>Pseudomonadati</taxon>
        <taxon>Pseudomonadota</taxon>
        <taxon>Gammaproteobacteria</taxon>
        <taxon>Legionellales</taxon>
        <taxon>Legionellaceae</taxon>
        <taxon>Legionella</taxon>
    </lineage>
</organism>